<keyword id="KW-0028">Amino-acid biosynthesis</keyword>
<keyword id="KW-0963">Cytoplasm</keyword>
<keyword id="KW-0413">Isomerase</keyword>
<keyword id="KW-0486">Methionine biosynthesis</keyword>
<keyword id="KW-0539">Nucleus</keyword>
<keyword id="KW-1185">Reference proteome</keyword>
<organism>
    <name type="scientific">Podospora anserina (strain S / ATCC MYA-4624 / DSM 980 / FGSC 10383)</name>
    <name type="common">Pleurage anserina</name>
    <dbReference type="NCBI Taxonomy" id="515849"/>
    <lineage>
        <taxon>Eukaryota</taxon>
        <taxon>Fungi</taxon>
        <taxon>Dikarya</taxon>
        <taxon>Ascomycota</taxon>
        <taxon>Pezizomycotina</taxon>
        <taxon>Sordariomycetes</taxon>
        <taxon>Sordariomycetidae</taxon>
        <taxon>Sordariales</taxon>
        <taxon>Podosporaceae</taxon>
        <taxon>Podospora</taxon>
        <taxon>Podospora anserina</taxon>
    </lineage>
</organism>
<comment type="function">
    <text evidence="1">Catalyzes the interconversion of methylthioribose-1-phosphate (MTR-1-P) into methylthioribulose-1-phosphate (MTRu-1-P).</text>
</comment>
<comment type="catalytic activity">
    <reaction evidence="1">
        <text>5-(methylsulfanyl)-alpha-D-ribose 1-phosphate = 5-(methylsulfanyl)-D-ribulose 1-phosphate</text>
        <dbReference type="Rhea" id="RHEA:19989"/>
        <dbReference type="ChEBI" id="CHEBI:58533"/>
        <dbReference type="ChEBI" id="CHEBI:58548"/>
        <dbReference type="EC" id="5.3.1.23"/>
    </reaction>
</comment>
<comment type="pathway">
    <text evidence="1">Amino-acid biosynthesis; L-methionine biosynthesis via salvage pathway; L-methionine from S-methyl-5-thio-alpha-D-ribose 1-phosphate: step 1/6.</text>
</comment>
<comment type="subcellular location">
    <subcellularLocation>
        <location evidence="1">Cytoplasm</location>
    </subcellularLocation>
    <subcellularLocation>
        <location evidence="1">Nucleus</location>
    </subcellularLocation>
</comment>
<comment type="similarity">
    <text evidence="1">Belongs to the eIF-2B alpha/beta/delta subunits family. MtnA subfamily.</text>
</comment>
<comment type="sequence caution" evidence="2">
    <conflict type="erroneous initiation">
        <sequence resource="EMBL-CDS" id="CAP65207"/>
    </conflict>
    <text>Extended N-terminus.</text>
</comment>
<comment type="sequence caution" evidence="2">
    <conflict type="erroneous initiation">
        <sequence resource="EMBL-CDS" id="CDP29419"/>
    </conflict>
    <text>Extended N-terminus.</text>
</comment>
<evidence type="ECO:0000255" key="1">
    <source>
        <dbReference type="HAMAP-Rule" id="MF_03119"/>
    </source>
</evidence>
<evidence type="ECO:0000305" key="2"/>
<sequence length="395" mass="42785">MATLQAIKYSRGKLLVLDQLRLPHENHYDEVSTAEEAFDCIRSMRVRGAPAIAIVAALAHAVELHNGDCTATEPEEVIAHIEKRLDYLKESRPTAVDLSNAITLLKLATRAANLEGLAHPEAKEAILNTYIQTAEEILAKDLHNNTSIGSYGTAWLQQQYSASSEKPISVLTHCNTGSLATSGHGTALGIIRTLHSEGLLKHAYCTETRPYNQGSRLTSFELVFEGIPSTLITDSMAGALFNLHRERMNIGAVIVGADRVVRNGDTANKIGTYQLAVLARHHGVKFVVAAPTTSIDLETGNGSAIEIEERKREELTQISGAIVNEDGTVDTSKTARVAIADQRIGVWNPAFDVTPHELIDAIVTERGTVVKGADGKFDFSQVLPERLASVAARQL</sequence>
<protein>
    <recommendedName>
        <fullName evidence="1">Methylthioribose-1-phosphate isomerase</fullName>
        <shortName evidence="1">M1Pi</shortName>
        <shortName evidence="1">MTR-1-P isomerase</shortName>
        <ecNumber evidence="1">5.3.1.23</ecNumber>
    </recommendedName>
    <alternativeName>
        <fullName evidence="1">S-methyl-5-thioribose-1-phosphate isomerase</fullName>
    </alternativeName>
    <alternativeName>
        <fullName evidence="1">Translation initiation factor eIF-2B subunit alpha/beta/delta-like protein</fullName>
    </alternativeName>
</protein>
<dbReference type="EC" id="5.3.1.23" evidence="1"/>
<dbReference type="EMBL" id="CU633871">
    <property type="protein sequence ID" value="CAP65207.1"/>
    <property type="status" value="ALT_INIT"/>
    <property type="molecule type" value="Genomic_DNA"/>
</dbReference>
<dbReference type="EMBL" id="FO904940">
    <property type="protein sequence ID" value="CDP29419.1"/>
    <property type="status" value="ALT_INIT"/>
    <property type="molecule type" value="Genomic_DNA"/>
</dbReference>
<dbReference type="RefSeq" id="XP_001905298.1">
    <property type="nucleotide sequence ID" value="XM_001905263.1"/>
</dbReference>
<dbReference type="SMR" id="B2AML6"/>
<dbReference type="FunCoup" id="B2AML6">
    <property type="interactions" value="705"/>
</dbReference>
<dbReference type="STRING" id="515849.B2AML6"/>
<dbReference type="GeneID" id="6189515"/>
<dbReference type="KEGG" id="pan:PODANSg2322"/>
<dbReference type="eggNOG" id="KOG1468">
    <property type="taxonomic scope" value="Eukaryota"/>
</dbReference>
<dbReference type="HOGENOM" id="CLU_016218_1_3_1"/>
<dbReference type="InParanoid" id="B2AML6"/>
<dbReference type="OrthoDB" id="2461at2759"/>
<dbReference type="UniPathway" id="UPA00904">
    <property type="reaction ID" value="UER00874"/>
</dbReference>
<dbReference type="Proteomes" id="UP000001197">
    <property type="component" value="Chromosome 5"/>
</dbReference>
<dbReference type="GO" id="GO:0005737">
    <property type="term" value="C:cytoplasm"/>
    <property type="evidence" value="ECO:0007669"/>
    <property type="project" value="UniProtKB-SubCell"/>
</dbReference>
<dbReference type="GO" id="GO:0005634">
    <property type="term" value="C:nucleus"/>
    <property type="evidence" value="ECO:0007669"/>
    <property type="project" value="UniProtKB-SubCell"/>
</dbReference>
<dbReference type="GO" id="GO:0046523">
    <property type="term" value="F:S-methyl-5-thioribose-1-phosphate isomerase activity"/>
    <property type="evidence" value="ECO:0007669"/>
    <property type="project" value="UniProtKB-UniRule"/>
</dbReference>
<dbReference type="GO" id="GO:0019509">
    <property type="term" value="P:L-methionine salvage from methylthioadenosine"/>
    <property type="evidence" value="ECO:0007669"/>
    <property type="project" value="UniProtKB-UniRule"/>
</dbReference>
<dbReference type="FunFam" id="1.20.120.420:FF:000003">
    <property type="entry name" value="Methylthioribose-1-phosphate isomerase"/>
    <property type="match status" value="1"/>
</dbReference>
<dbReference type="FunFam" id="3.40.50.10470:FF:000003">
    <property type="entry name" value="Methylthioribose-1-phosphate isomerase"/>
    <property type="match status" value="1"/>
</dbReference>
<dbReference type="Gene3D" id="1.20.120.420">
    <property type="entry name" value="translation initiation factor eif-2b, domain 1"/>
    <property type="match status" value="1"/>
</dbReference>
<dbReference type="Gene3D" id="3.40.50.10470">
    <property type="entry name" value="Translation initiation factor eif-2b, domain 2"/>
    <property type="match status" value="1"/>
</dbReference>
<dbReference type="HAMAP" id="MF_01678">
    <property type="entry name" value="Salvage_MtnA"/>
    <property type="match status" value="1"/>
</dbReference>
<dbReference type="InterPro" id="IPR000649">
    <property type="entry name" value="IF-2B-related"/>
</dbReference>
<dbReference type="InterPro" id="IPR005251">
    <property type="entry name" value="IF-M1Pi"/>
</dbReference>
<dbReference type="InterPro" id="IPR042529">
    <property type="entry name" value="IF_2B-like_C"/>
</dbReference>
<dbReference type="InterPro" id="IPR011559">
    <property type="entry name" value="Initiation_fac_2B_a/b/d"/>
</dbReference>
<dbReference type="InterPro" id="IPR027363">
    <property type="entry name" value="M1Pi_N"/>
</dbReference>
<dbReference type="InterPro" id="IPR037171">
    <property type="entry name" value="NagB/RpiA_transferase-like"/>
</dbReference>
<dbReference type="NCBIfam" id="TIGR00524">
    <property type="entry name" value="eIF-2B_rel"/>
    <property type="match status" value="1"/>
</dbReference>
<dbReference type="NCBIfam" id="NF004326">
    <property type="entry name" value="PRK05720.1"/>
    <property type="match status" value="1"/>
</dbReference>
<dbReference type="NCBIfam" id="TIGR00512">
    <property type="entry name" value="salvage_mtnA"/>
    <property type="match status" value="1"/>
</dbReference>
<dbReference type="PANTHER" id="PTHR43475">
    <property type="entry name" value="METHYLTHIORIBOSE-1-PHOSPHATE ISOMERASE"/>
    <property type="match status" value="1"/>
</dbReference>
<dbReference type="PANTHER" id="PTHR43475:SF1">
    <property type="entry name" value="METHYLTHIORIBOSE-1-PHOSPHATE ISOMERASE"/>
    <property type="match status" value="1"/>
</dbReference>
<dbReference type="Pfam" id="PF01008">
    <property type="entry name" value="IF-2B"/>
    <property type="match status" value="1"/>
</dbReference>
<dbReference type="SUPFAM" id="SSF100950">
    <property type="entry name" value="NagB/RpiA/CoA transferase-like"/>
    <property type="match status" value="1"/>
</dbReference>
<feature type="chain" id="PRO_0000402044" description="Methylthioribose-1-phosphate isomerase">
    <location>
        <begin position="1"/>
        <end position="395"/>
    </location>
</feature>
<feature type="active site" description="Proton donor" evidence="1">
    <location>
        <position position="258"/>
    </location>
</feature>
<feature type="site" description="Transition state stabilizer" evidence="1">
    <location>
        <position position="174"/>
    </location>
</feature>
<gene>
    <name evidence="1" type="primary">MRI1</name>
    <name type="ordered locus">Pa_5_4460</name>
    <name type="ORF">PODANS_5_4460</name>
</gene>
<reference key="1">
    <citation type="journal article" date="2008" name="Genome Biol.">
        <title>The genome sequence of the model ascomycete fungus Podospora anserina.</title>
        <authorList>
            <person name="Espagne E."/>
            <person name="Lespinet O."/>
            <person name="Malagnac F."/>
            <person name="Da Silva C."/>
            <person name="Jaillon O."/>
            <person name="Porcel B.M."/>
            <person name="Couloux A."/>
            <person name="Aury J.-M."/>
            <person name="Segurens B."/>
            <person name="Poulain J."/>
            <person name="Anthouard V."/>
            <person name="Grossetete S."/>
            <person name="Khalili H."/>
            <person name="Coppin E."/>
            <person name="Dequard-Chablat M."/>
            <person name="Picard M."/>
            <person name="Contamine V."/>
            <person name="Arnaise S."/>
            <person name="Bourdais A."/>
            <person name="Berteaux-Lecellier V."/>
            <person name="Gautheret D."/>
            <person name="de Vries R.P."/>
            <person name="Battaglia E."/>
            <person name="Coutinho P.M."/>
            <person name="Danchin E.G.J."/>
            <person name="Henrissat B."/>
            <person name="El Khoury R."/>
            <person name="Sainsard-Chanet A."/>
            <person name="Boivin A."/>
            <person name="Pinan-Lucarre B."/>
            <person name="Sellem C.H."/>
            <person name="Debuchy R."/>
            <person name="Wincker P."/>
            <person name="Weissenbach J."/>
            <person name="Silar P."/>
        </authorList>
    </citation>
    <scope>NUCLEOTIDE SEQUENCE [LARGE SCALE GENOMIC DNA]</scope>
    <source>
        <strain>S / ATCC MYA-4624 / DSM 980 / FGSC 10383</strain>
    </source>
</reference>
<reference key="2">
    <citation type="journal article" date="2014" name="Genetics">
        <title>Maintaining two mating types: Structure of the mating type locus and its role in heterokaryosis in Podospora anserina.</title>
        <authorList>
            <person name="Grognet P."/>
            <person name="Bidard F."/>
            <person name="Kuchly C."/>
            <person name="Tong L.C.H."/>
            <person name="Coppin E."/>
            <person name="Benkhali J.A."/>
            <person name="Couloux A."/>
            <person name="Wincker P."/>
            <person name="Debuchy R."/>
            <person name="Silar P."/>
        </authorList>
    </citation>
    <scope>GENOME REANNOTATION</scope>
    <source>
        <strain>S / ATCC MYA-4624 / DSM 980 / FGSC 10383</strain>
    </source>
</reference>
<name>MTNA_PODAN</name>
<accession>B2AML6</accession>
<accession>A0A090CSH7</accession>
<proteinExistence type="inferred from homology"/>